<protein>
    <recommendedName>
        <fullName evidence="1">Adenylyl-sulfate kinase</fullName>
        <ecNumber evidence="1">2.7.1.25</ecNumber>
    </recommendedName>
    <alternativeName>
        <fullName evidence="1">APS kinase</fullName>
    </alternativeName>
    <alternativeName>
        <fullName evidence="1">ATP adenosine-5'-phosphosulfate 3'-phosphotransferase</fullName>
    </alternativeName>
    <alternativeName>
        <fullName evidence="1">Adenosine-5'-phosphosulfate kinase</fullName>
    </alternativeName>
</protein>
<keyword id="KW-0067">ATP-binding</keyword>
<keyword id="KW-0418">Kinase</keyword>
<keyword id="KW-0547">Nucleotide-binding</keyword>
<keyword id="KW-0597">Phosphoprotein</keyword>
<keyword id="KW-1185">Reference proteome</keyword>
<keyword id="KW-0808">Transferase</keyword>
<organism>
    <name type="scientific">Shewanella amazonensis (strain ATCC BAA-1098 / SB2B)</name>
    <dbReference type="NCBI Taxonomy" id="326297"/>
    <lineage>
        <taxon>Bacteria</taxon>
        <taxon>Pseudomonadati</taxon>
        <taxon>Pseudomonadota</taxon>
        <taxon>Gammaproteobacteria</taxon>
        <taxon>Alteromonadales</taxon>
        <taxon>Shewanellaceae</taxon>
        <taxon>Shewanella</taxon>
    </lineage>
</organism>
<accession>A1S9N4</accession>
<evidence type="ECO:0000255" key="1">
    <source>
        <dbReference type="HAMAP-Rule" id="MF_00065"/>
    </source>
</evidence>
<gene>
    <name evidence="1" type="primary">cysC</name>
    <name type="ordered locus">Sama_2888</name>
</gene>
<name>CYSC_SHEAM</name>
<comment type="function">
    <text evidence="1">Catalyzes the synthesis of activated sulfate.</text>
</comment>
<comment type="catalytic activity">
    <reaction evidence="1">
        <text>adenosine 5'-phosphosulfate + ATP = 3'-phosphoadenylyl sulfate + ADP + H(+)</text>
        <dbReference type="Rhea" id="RHEA:24152"/>
        <dbReference type="ChEBI" id="CHEBI:15378"/>
        <dbReference type="ChEBI" id="CHEBI:30616"/>
        <dbReference type="ChEBI" id="CHEBI:58243"/>
        <dbReference type="ChEBI" id="CHEBI:58339"/>
        <dbReference type="ChEBI" id="CHEBI:456216"/>
        <dbReference type="EC" id="2.7.1.25"/>
    </reaction>
</comment>
<comment type="pathway">
    <text evidence="1">Sulfur metabolism; hydrogen sulfide biosynthesis; sulfite from sulfate: step 2/3.</text>
</comment>
<comment type="similarity">
    <text evidence="1">Belongs to the APS kinase family.</text>
</comment>
<feature type="chain" id="PRO_1000009021" description="Adenylyl-sulfate kinase">
    <location>
        <begin position="1"/>
        <end position="198"/>
    </location>
</feature>
<feature type="active site" description="Phosphoserine intermediate" evidence="1">
    <location>
        <position position="105"/>
    </location>
</feature>
<feature type="binding site" evidence="1">
    <location>
        <begin position="31"/>
        <end position="38"/>
    </location>
    <ligand>
        <name>ATP</name>
        <dbReference type="ChEBI" id="CHEBI:30616"/>
    </ligand>
</feature>
<dbReference type="EC" id="2.7.1.25" evidence="1"/>
<dbReference type="EMBL" id="CP000507">
    <property type="protein sequence ID" value="ABM01091.1"/>
    <property type="molecule type" value="Genomic_DNA"/>
</dbReference>
<dbReference type="RefSeq" id="WP_011760996.1">
    <property type="nucleotide sequence ID" value="NC_008700.1"/>
</dbReference>
<dbReference type="SMR" id="A1S9N4"/>
<dbReference type="STRING" id="326297.Sama_2888"/>
<dbReference type="KEGG" id="saz:Sama_2888"/>
<dbReference type="eggNOG" id="COG0529">
    <property type="taxonomic scope" value="Bacteria"/>
</dbReference>
<dbReference type="HOGENOM" id="CLU_046932_1_0_6"/>
<dbReference type="OrthoDB" id="9804504at2"/>
<dbReference type="UniPathway" id="UPA00140">
    <property type="reaction ID" value="UER00205"/>
</dbReference>
<dbReference type="Proteomes" id="UP000009175">
    <property type="component" value="Chromosome"/>
</dbReference>
<dbReference type="GO" id="GO:0004020">
    <property type="term" value="F:adenylylsulfate kinase activity"/>
    <property type="evidence" value="ECO:0007669"/>
    <property type="project" value="UniProtKB-UniRule"/>
</dbReference>
<dbReference type="GO" id="GO:0005524">
    <property type="term" value="F:ATP binding"/>
    <property type="evidence" value="ECO:0007669"/>
    <property type="project" value="UniProtKB-UniRule"/>
</dbReference>
<dbReference type="GO" id="GO:0070814">
    <property type="term" value="P:hydrogen sulfide biosynthetic process"/>
    <property type="evidence" value="ECO:0007669"/>
    <property type="project" value="UniProtKB-UniRule"/>
</dbReference>
<dbReference type="GO" id="GO:0000103">
    <property type="term" value="P:sulfate assimilation"/>
    <property type="evidence" value="ECO:0007669"/>
    <property type="project" value="UniProtKB-UniRule"/>
</dbReference>
<dbReference type="CDD" id="cd02027">
    <property type="entry name" value="APSK"/>
    <property type="match status" value="1"/>
</dbReference>
<dbReference type="FunFam" id="3.40.50.300:FF:000212">
    <property type="entry name" value="Adenylyl-sulfate kinase"/>
    <property type="match status" value="1"/>
</dbReference>
<dbReference type="Gene3D" id="3.40.50.300">
    <property type="entry name" value="P-loop containing nucleotide triphosphate hydrolases"/>
    <property type="match status" value="1"/>
</dbReference>
<dbReference type="HAMAP" id="MF_00065">
    <property type="entry name" value="Adenylyl_sulf_kinase"/>
    <property type="match status" value="1"/>
</dbReference>
<dbReference type="InterPro" id="IPR002891">
    <property type="entry name" value="APS_kinase"/>
</dbReference>
<dbReference type="InterPro" id="IPR027417">
    <property type="entry name" value="P-loop_NTPase"/>
</dbReference>
<dbReference type="NCBIfam" id="TIGR00455">
    <property type="entry name" value="apsK"/>
    <property type="match status" value="1"/>
</dbReference>
<dbReference type="NCBIfam" id="NF003013">
    <property type="entry name" value="PRK03846.1"/>
    <property type="match status" value="1"/>
</dbReference>
<dbReference type="PANTHER" id="PTHR11055:SF63">
    <property type="entry name" value="ADENYLYL-SULFATE KINASE 1, CHLOROPLASTIC"/>
    <property type="match status" value="1"/>
</dbReference>
<dbReference type="PANTHER" id="PTHR11055">
    <property type="entry name" value="BIFUNCTIONAL 3'-PHOSPHOADENOSINE 5'-PHOSPHOSULFATE SYNTHASE"/>
    <property type="match status" value="1"/>
</dbReference>
<dbReference type="Pfam" id="PF01583">
    <property type="entry name" value="APS_kinase"/>
    <property type="match status" value="1"/>
</dbReference>
<dbReference type="SUPFAM" id="SSF52540">
    <property type="entry name" value="P-loop containing nucleoside triphosphate hydrolases"/>
    <property type="match status" value="1"/>
</dbReference>
<sequence>MNHIVWHQHAITHSERAAQKGHRGAILWFTGLSGAGKSTLAGALEAELFRRGLHSYLLDGDNVRHGLCKDLGFSLEDRRENIRRVGEVAKLMLDAGLLVLSAFVSPQRAERDLVRALVGEGEFIEVHVATPLTVCESRDPKGLYQKARAGEIKDFTGISSPYEAPVSAELVIDTSEGDLDSQVAKLVDYLISGGYIPA</sequence>
<proteinExistence type="inferred from homology"/>
<reference key="1">
    <citation type="submission" date="2006-12" db="EMBL/GenBank/DDBJ databases">
        <title>Complete sequence of Shewanella amazonensis SB2B.</title>
        <authorList>
            <consortium name="US DOE Joint Genome Institute"/>
            <person name="Copeland A."/>
            <person name="Lucas S."/>
            <person name="Lapidus A."/>
            <person name="Barry K."/>
            <person name="Detter J.C."/>
            <person name="Glavina del Rio T."/>
            <person name="Hammon N."/>
            <person name="Israni S."/>
            <person name="Dalin E."/>
            <person name="Tice H."/>
            <person name="Pitluck S."/>
            <person name="Munk A.C."/>
            <person name="Brettin T."/>
            <person name="Bruce D."/>
            <person name="Han C."/>
            <person name="Tapia R."/>
            <person name="Gilna P."/>
            <person name="Schmutz J."/>
            <person name="Larimer F."/>
            <person name="Land M."/>
            <person name="Hauser L."/>
            <person name="Kyrpides N."/>
            <person name="Mikhailova N."/>
            <person name="Fredrickson J."/>
            <person name="Richardson P."/>
        </authorList>
    </citation>
    <scope>NUCLEOTIDE SEQUENCE [LARGE SCALE GENOMIC DNA]</scope>
    <source>
        <strain>ATCC BAA-1098 / SB2B</strain>
    </source>
</reference>